<protein>
    <recommendedName>
        <fullName evidence="1">Tol-Pal system protein TolB</fullName>
    </recommendedName>
</protein>
<gene>
    <name evidence="1" type="primary">tolB</name>
    <name type="ordered locus">RPC_4751</name>
</gene>
<sequence>MSSRLPALPLSRRQALLGGAGSAAALLLPGGAQAQTRLQITEGNVAPMPIAIPNFVAGTPADNEVGLGVAQVITNNLKRSGLFAPIDQAAFIERISNIDTPPQFQSWKTINAQALVTGRMTKQGDGRLKAEFRLWDVAAGQQLTGQQYFTSPEYWRRIAHIISDQIYERLTGEKGYFDSRVVFIDETGSKERRVKRLALMDQDGANVRYLTRGADLVLTPRFSPSTQEITYMEFGQGDPRVYLFNIETGQREIVGNFPGMSFSPRFSPDGQRVIMSLQQGGNSNLFVMDLRSKSTTRLTDTPAIDTSPSYAPDGSKICFESDRGGKPQIYVMPAGGGGAQRISFGEGSYSTPVWSPRGDYIAFTKQGGGQFSIGIMKPDGSGERLLTSGYHNEGPTFAPNGRVLMFFRDPGGNGGPSLFTVDISGRNEQKVPTPGFASDPAWSPLLS</sequence>
<reference key="1">
    <citation type="submission" date="2006-03" db="EMBL/GenBank/DDBJ databases">
        <title>Complete sequence of Rhodopseudomonas palustris BisB18.</title>
        <authorList>
            <consortium name="US DOE Joint Genome Institute"/>
            <person name="Copeland A."/>
            <person name="Lucas S."/>
            <person name="Lapidus A."/>
            <person name="Barry K."/>
            <person name="Detter J.C."/>
            <person name="Glavina del Rio T."/>
            <person name="Hammon N."/>
            <person name="Israni S."/>
            <person name="Dalin E."/>
            <person name="Tice H."/>
            <person name="Pitluck S."/>
            <person name="Chain P."/>
            <person name="Malfatti S."/>
            <person name="Shin M."/>
            <person name="Vergez L."/>
            <person name="Schmutz J."/>
            <person name="Larimer F."/>
            <person name="Land M."/>
            <person name="Hauser L."/>
            <person name="Pelletier D.A."/>
            <person name="Kyrpides N."/>
            <person name="Anderson I."/>
            <person name="Oda Y."/>
            <person name="Harwood C.S."/>
            <person name="Richardson P."/>
        </authorList>
    </citation>
    <scope>NUCLEOTIDE SEQUENCE [LARGE SCALE GENOMIC DNA]</scope>
    <source>
        <strain>BisB18</strain>
    </source>
</reference>
<feature type="signal peptide" evidence="1">
    <location>
        <begin position="1"/>
        <end position="34"/>
    </location>
</feature>
<feature type="chain" id="PRO_0000259080" description="Tol-Pal system protein TolB" evidence="1">
    <location>
        <begin position="35"/>
        <end position="447"/>
    </location>
</feature>
<feature type="region of interest" description="Disordered" evidence="2">
    <location>
        <begin position="426"/>
        <end position="447"/>
    </location>
</feature>
<proteinExistence type="inferred from homology"/>
<name>TOLB_RHOPB</name>
<comment type="function">
    <text evidence="1">Part of the Tol-Pal system, which plays a role in outer membrane invagination during cell division and is important for maintaining outer membrane integrity.</text>
</comment>
<comment type="subunit">
    <text evidence="1">The Tol-Pal system is composed of five core proteins: the inner membrane proteins TolA, TolQ and TolR, the periplasmic protein TolB and the outer membrane protein Pal. They form a network linking the inner and outer membranes and the peptidoglycan layer.</text>
</comment>
<comment type="subcellular location">
    <subcellularLocation>
        <location evidence="1">Periplasm</location>
    </subcellularLocation>
</comment>
<comment type="similarity">
    <text evidence="1">Belongs to the TolB family.</text>
</comment>
<comment type="sequence caution" evidence="3">
    <conflict type="erroneous initiation">
        <sequence resource="EMBL-CDS" id="ABD90273"/>
    </conflict>
</comment>
<keyword id="KW-0131">Cell cycle</keyword>
<keyword id="KW-0132">Cell division</keyword>
<keyword id="KW-0574">Periplasm</keyword>
<keyword id="KW-0732">Signal</keyword>
<organism>
    <name type="scientific">Rhodopseudomonas palustris (strain BisB18)</name>
    <dbReference type="NCBI Taxonomy" id="316056"/>
    <lineage>
        <taxon>Bacteria</taxon>
        <taxon>Pseudomonadati</taxon>
        <taxon>Pseudomonadota</taxon>
        <taxon>Alphaproteobacteria</taxon>
        <taxon>Hyphomicrobiales</taxon>
        <taxon>Nitrobacteraceae</taxon>
        <taxon>Rhodopseudomonas</taxon>
    </lineage>
</organism>
<accession>Q20X63</accession>
<evidence type="ECO:0000255" key="1">
    <source>
        <dbReference type="HAMAP-Rule" id="MF_00671"/>
    </source>
</evidence>
<evidence type="ECO:0000256" key="2">
    <source>
        <dbReference type="SAM" id="MobiDB-lite"/>
    </source>
</evidence>
<evidence type="ECO:0000305" key="3"/>
<dbReference type="EMBL" id="CP000301">
    <property type="protein sequence ID" value="ABD90273.1"/>
    <property type="status" value="ALT_INIT"/>
    <property type="molecule type" value="Genomic_DNA"/>
</dbReference>
<dbReference type="SMR" id="Q20X63"/>
<dbReference type="STRING" id="316056.RPC_4751"/>
<dbReference type="KEGG" id="rpc:RPC_4751"/>
<dbReference type="eggNOG" id="COG0823">
    <property type="taxonomic scope" value="Bacteria"/>
</dbReference>
<dbReference type="HOGENOM" id="CLU_047123_0_0_5"/>
<dbReference type="OrthoDB" id="9802240at2"/>
<dbReference type="GO" id="GO:0042597">
    <property type="term" value="C:periplasmic space"/>
    <property type="evidence" value="ECO:0007669"/>
    <property type="project" value="UniProtKB-SubCell"/>
</dbReference>
<dbReference type="GO" id="GO:0051301">
    <property type="term" value="P:cell division"/>
    <property type="evidence" value="ECO:0007669"/>
    <property type="project" value="UniProtKB-UniRule"/>
</dbReference>
<dbReference type="GO" id="GO:0017038">
    <property type="term" value="P:protein import"/>
    <property type="evidence" value="ECO:0007669"/>
    <property type="project" value="InterPro"/>
</dbReference>
<dbReference type="Gene3D" id="2.120.10.30">
    <property type="entry name" value="TolB, C-terminal domain"/>
    <property type="match status" value="1"/>
</dbReference>
<dbReference type="Gene3D" id="3.40.50.10070">
    <property type="entry name" value="TolB, N-terminal domain"/>
    <property type="match status" value="1"/>
</dbReference>
<dbReference type="HAMAP" id="MF_00671">
    <property type="entry name" value="TolB"/>
    <property type="match status" value="1"/>
</dbReference>
<dbReference type="InterPro" id="IPR011042">
    <property type="entry name" value="6-blade_b-propeller_TolB-like"/>
</dbReference>
<dbReference type="InterPro" id="IPR011659">
    <property type="entry name" value="PD40"/>
</dbReference>
<dbReference type="InterPro" id="IPR006311">
    <property type="entry name" value="TAT_signal"/>
</dbReference>
<dbReference type="InterPro" id="IPR014167">
    <property type="entry name" value="Tol-Pal_TolB"/>
</dbReference>
<dbReference type="InterPro" id="IPR007195">
    <property type="entry name" value="TolB_N"/>
</dbReference>
<dbReference type="NCBIfam" id="TIGR02800">
    <property type="entry name" value="propeller_TolB"/>
    <property type="match status" value="1"/>
</dbReference>
<dbReference type="PANTHER" id="PTHR36842:SF1">
    <property type="entry name" value="PROTEIN TOLB"/>
    <property type="match status" value="1"/>
</dbReference>
<dbReference type="PANTHER" id="PTHR36842">
    <property type="entry name" value="PROTEIN TOLB HOMOLOG"/>
    <property type="match status" value="1"/>
</dbReference>
<dbReference type="Pfam" id="PF07676">
    <property type="entry name" value="PD40"/>
    <property type="match status" value="3"/>
</dbReference>
<dbReference type="Pfam" id="PF04052">
    <property type="entry name" value="TolB_N"/>
    <property type="match status" value="1"/>
</dbReference>
<dbReference type="SUPFAM" id="SSF52964">
    <property type="entry name" value="TolB, N-terminal domain"/>
    <property type="match status" value="1"/>
</dbReference>
<dbReference type="SUPFAM" id="SSF69304">
    <property type="entry name" value="Tricorn protease N-terminal domain"/>
    <property type="match status" value="1"/>
</dbReference>
<dbReference type="PROSITE" id="PS51318">
    <property type="entry name" value="TAT"/>
    <property type="match status" value="1"/>
</dbReference>